<keyword id="KW-0997">Cell inner membrane</keyword>
<keyword id="KW-1003">Cell membrane</keyword>
<keyword id="KW-0472">Membrane</keyword>
<keyword id="KW-0808">Transferase</keyword>
<keyword id="KW-0812">Transmembrane</keyword>
<keyword id="KW-1133">Transmembrane helix</keyword>
<protein>
    <recommendedName>
        <fullName evidence="1">Phosphatidylglycerol--prolipoprotein diacylglyceryl transferase</fullName>
        <ecNumber evidence="1">2.5.1.145</ecNumber>
    </recommendedName>
</protein>
<proteinExistence type="inferred from homology"/>
<comment type="function">
    <text evidence="1">Catalyzes the transfer of the diacylglyceryl group from phosphatidylglycerol to the sulfhydryl group of the N-terminal cysteine of a prolipoprotein, the first step in the formation of mature lipoproteins.</text>
</comment>
<comment type="catalytic activity">
    <reaction evidence="1">
        <text>L-cysteinyl-[prolipoprotein] + a 1,2-diacyl-sn-glycero-3-phospho-(1'-sn-glycerol) = an S-1,2-diacyl-sn-glyceryl-L-cysteinyl-[prolipoprotein] + sn-glycerol 1-phosphate + H(+)</text>
        <dbReference type="Rhea" id="RHEA:56712"/>
        <dbReference type="Rhea" id="RHEA-COMP:14679"/>
        <dbReference type="Rhea" id="RHEA-COMP:14680"/>
        <dbReference type="ChEBI" id="CHEBI:15378"/>
        <dbReference type="ChEBI" id="CHEBI:29950"/>
        <dbReference type="ChEBI" id="CHEBI:57685"/>
        <dbReference type="ChEBI" id="CHEBI:64716"/>
        <dbReference type="ChEBI" id="CHEBI:140658"/>
        <dbReference type="EC" id="2.5.1.145"/>
    </reaction>
</comment>
<comment type="pathway">
    <text evidence="1">Protein modification; lipoprotein biosynthesis (diacylglyceryl transfer).</text>
</comment>
<comment type="subcellular location">
    <subcellularLocation>
        <location evidence="1">Cell inner membrane</location>
        <topology evidence="1">Multi-pass membrane protein</topology>
    </subcellularLocation>
</comment>
<comment type="similarity">
    <text evidence="1">Belongs to the Lgt family.</text>
</comment>
<dbReference type="EC" id="2.5.1.145" evidence="1"/>
<dbReference type="EMBL" id="CP000554">
    <property type="protein sequence ID" value="ABM77414.1"/>
    <property type="molecule type" value="Genomic_DNA"/>
</dbReference>
<dbReference type="RefSeq" id="WP_011825333.1">
    <property type="nucleotide sequence ID" value="NC_008820.1"/>
</dbReference>
<dbReference type="SMR" id="A2C7F4"/>
<dbReference type="STRING" id="59922.P9303_06631"/>
<dbReference type="KEGG" id="pmf:P9303_06631"/>
<dbReference type="HOGENOM" id="CLU_013386_1_2_3"/>
<dbReference type="BioCyc" id="PMAR59922:G1G80-610-MONOMER"/>
<dbReference type="UniPathway" id="UPA00664"/>
<dbReference type="Proteomes" id="UP000002274">
    <property type="component" value="Chromosome"/>
</dbReference>
<dbReference type="GO" id="GO:0005886">
    <property type="term" value="C:plasma membrane"/>
    <property type="evidence" value="ECO:0007669"/>
    <property type="project" value="UniProtKB-SubCell"/>
</dbReference>
<dbReference type="GO" id="GO:0008961">
    <property type="term" value="F:phosphatidylglycerol-prolipoprotein diacylglyceryl transferase activity"/>
    <property type="evidence" value="ECO:0007669"/>
    <property type="project" value="UniProtKB-UniRule"/>
</dbReference>
<dbReference type="GO" id="GO:0042158">
    <property type="term" value="P:lipoprotein biosynthetic process"/>
    <property type="evidence" value="ECO:0007669"/>
    <property type="project" value="UniProtKB-UniRule"/>
</dbReference>
<dbReference type="HAMAP" id="MF_01147">
    <property type="entry name" value="Lgt"/>
    <property type="match status" value="1"/>
</dbReference>
<dbReference type="InterPro" id="IPR001640">
    <property type="entry name" value="Lgt"/>
</dbReference>
<dbReference type="NCBIfam" id="TIGR00544">
    <property type="entry name" value="lgt"/>
    <property type="match status" value="1"/>
</dbReference>
<dbReference type="PANTHER" id="PTHR30589:SF0">
    <property type="entry name" value="PHOSPHATIDYLGLYCEROL--PROLIPOPROTEIN DIACYLGLYCERYL TRANSFERASE"/>
    <property type="match status" value="1"/>
</dbReference>
<dbReference type="PANTHER" id="PTHR30589">
    <property type="entry name" value="PROLIPOPROTEIN DIACYLGLYCERYL TRANSFERASE"/>
    <property type="match status" value="1"/>
</dbReference>
<dbReference type="Pfam" id="PF01790">
    <property type="entry name" value="LGT"/>
    <property type="match status" value="1"/>
</dbReference>
<dbReference type="PROSITE" id="PS01311">
    <property type="entry name" value="LGT"/>
    <property type="match status" value="1"/>
</dbReference>
<organism>
    <name type="scientific">Prochlorococcus marinus (strain MIT 9303)</name>
    <dbReference type="NCBI Taxonomy" id="59922"/>
    <lineage>
        <taxon>Bacteria</taxon>
        <taxon>Bacillati</taxon>
        <taxon>Cyanobacteriota</taxon>
        <taxon>Cyanophyceae</taxon>
        <taxon>Synechococcales</taxon>
        <taxon>Prochlorococcaceae</taxon>
        <taxon>Prochlorococcus</taxon>
    </lineage>
</organism>
<reference key="1">
    <citation type="journal article" date="2007" name="PLoS Genet.">
        <title>Patterns and implications of gene gain and loss in the evolution of Prochlorococcus.</title>
        <authorList>
            <person name="Kettler G.C."/>
            <person name="Martiny A.C."/>
            <person name="Huang K."/>
            <person name="Zucker J."/>
            <person name="Coleman M.L."/>
            <person name="Rodrigue S."/>
            <person name="Chen F."/>
            <person name="Lapidus A."/>
            <person name="Ferriera S."/>
            <person name="Johnson J."/>
            <person name="Steglich C."/>
            <person name="Church G.M."/>
            <person name="Richardson P."/>
            <person name="Chisholm S.W."/>
        </authorList>
    </citation>
    <scope>NUCLEOTIDE SEQUENCE [LARGE SCALE GENOMIC DNA]</scope>
    <source>
        <strain>MIT 9303</strain>
    </source>
</reference>
<sequence length="304" mass="33744">MDAFIATFTSPGPELFQLGPFALRWYGLLIAIAVLIGLNLSSSLARKRGLEQGLISDLLPILVLTAVVGARIYYVAFEWRNYSGDNFWSSINIFGLAIPIPSAMEIWGGGIAIHGALLSGTLAVLIFCRWRRQAFWDVLDVLVPSIALGQAIGRWGNFFNNEAFGVPIKGDLAWKLFIPFVNRPLNYANNEFFHPTFLYESIWNLLVFTLLIVLFQRSNKGLLKLPAGALSCIYLITYSLGRVWIEALRTDPLCLGALPPSCEGGLRIAQLMSLAMMAVGGFGLWWLYGRKRKLPDPGRPKSFA</sequence>
<feature type="chain" id="PRO_1000053468" description="Phosphatidylglycerol--prolipoprotein diacylglyceryl transferase">
    <location>
        <begin position="1"/>
        <end position="304"/>
    </location>
</feature>
<feature type="transmembrane region" description="Helical" evidence="1">
    <location>
        <begin position="18"/>
        <end position="38"/>
    </location>
</feature>
<feature type="transmembrane region" description="Helical" evidence="1">
    <location>
        <begin position="58"/>
        <end position="78"/>
    </location>
</feature>
<feature type="transmembrane region" description="Helical" evidence="1">
    <location>
        <begin position="106"/>
        <end position="126"/>
    </location>
</feature>
<feature type="transmembrane region" description="Helical" evidence="1">
    <location>
        <begin position="133"/>
        <end position="153"/>
    </location>
</feature>
<feature type="transmembrane region" description="Helical" evidence="1">
    <location>
        <begin position="195"/>
        <end position="215"/>
    </location>
</feature>
<feature type="transmembrane region" description="Helical" evidence="1">
    <location>
        <begin position="221"/>
        <end position="241"/>
    </location>
</feature>
<feature type="transmembrane region" description="Helical" evidence="1">
    <location>
        <begin position="268"/>
        <end position="288"/>
    </location>
</feature>
<feature type="binding site" evidence="1">
    <location>
        <position position="154"/>
    </location>
    <ligand>
        <name>a 1,2-diacyl-sn-glycero-3-phospho-(1'-sn-glycerol)</name>
        <dbReference type="ChEBI" id="CHEBI:64716"/>
    </ligand>
</feature>
<name>LGT_PROM3</name>
<accession>A2C7F4</accession>
<evidence type="ECO:0000255" key="1">
    <source>
        <dbReference type="HAMAP-Rule" id="MF_01147"/>
    </source>
</evidence>
<gene>
    <name evidence="1" type="primary">lgt</name>
    <name type="ordered locus">P9303_06631</name>
</gene>